<organism>
    <name type="scientific">Synechococcus sp. (strain CC9902)</name>
    <dbReference type="NCBI Taxonomy" id="316279"/>
    <lineage>
        <taxon>Bacteria</taxon>
        <taxon>Bacillati</taxon>
        <taxon>Cyanobacteriota</taxon>
        <taxon>Cyanophyceae</taxon>
        <taxon>Synechococcales</taxon>
        <taxon>Synechococcaceae</taxon>
        <taxon>Synechococcus</taxon>
    </lineage>
</organism>
<gene>
    <name evidence="1" type="primary">psbL</name>
    <name type="ordered locus">Syncc9902_0225</name>
</gene>
<comment type="function">
    <text evidence="1">One of the components of the core complex of photosystem II (PSII). PSII is a light-driven water:plastoquinone oxidoreductase that uses light energy to abstract electrons from H(2)O, generating O(2) and a proton gradient subsequently used for ATP formation. It consists of a core antenna complex that captures photons, and an electron transfer chain that converts photonic excitation into a charge separation. This subunit is found at the monomer-monomer interface and is required for correct PSII assembly and/or dimerization.</text>
</comment>
<comment type="subunit">
    <text evidence="1">PSII is composed of 1 copy each of membrane proteins PsbA, PsbB, PsbC, PsbD, PsbE, PsbF, PsbH, PsbI, PsbJ, PsbK, PsbL, PsbM, PsbT, PsbX, PsbY, PsbZ, Psb30/Ycf12, peripheral proteins PsbO, CyanoQ (PsbQ), PsbU, PsbV and a large number of cofactors. It forms dimeric complexes.</text>
</comment>
<comment type="subcellular location">
    <subcellularLocation>
        <location evidence="1">Cellular thylakoid membrane</location>
        <topology evidence="1">Single-pass membrane protein</topology>
    </subcellularLocation>
</comment>
<comment type="similarity">
    <text evidence="1">Belongs to the PsbL family.</text>
</comment>
<accession>Q3B0C8</accession>
<dbReference type="EMBL" id="CP000097">
    <property type="protein sequence ID" value="ABB25200.1"/>
    <property type="molecule type" value="Genomic_DNA"/>
</dbReference>
<dbReference type="RefSeq" id="WP_009788330.1">
    <property type="nucleotide sequence ID" value="NC_007513.1"/>
</dbReference>
<dbReference type="SMR" id="Q3B0C8"/>
<dbReference type="STRING" id="316279.Syncc9902_0225"/>
<dbReference type="KEGG" id="sye:Syncc9902_0225"/>
<dbReference type="eggNOG" id="ENOG5033AKP">
    <property type="taxonomic scope" value="Bacteria"/>
</dbReference>
<dbReference type="HOGENOM" id="CLU_214425_0_0_3"/>
<dbReference type="Proteomes" id="UP000002712">
    <property type="component" value="Chromosome"/>
</dbReference>
<dbReference type="GO" id="GO:0009539">
    <property type="term" value="C:photosystem II reaction center"/>
    <property type="evidence" value="ECO:0007669"/>
    <property type="project" value="InterPro"/>
</dbReference>
<dbReference type="GO" id="GO:0031676">
    <property type="term" value="C:plasma membrane-derived thylakoid membrane"/>
    <property type="evidence" value="ECO:0007669"/>
    <property type="project" value="UniProtKB-SubCell"/>
</dbReference>
<dbReference type="GO" id="GO:0015979">
    <property type="term" value="P:photosynthesis"/>
    <property type="evidence" value="ECO:0007669"/>
    <property type="project" value="UniProtKB-UniRule"/>
</dbReference>
<dbReference type="HAMAP" id="MF_01317">
    <property type="entry name" value="PSII_PsbL"/>
    <property type="match status" value="1"/>
</dbReference>
<dbReference type="InterPro" id="IPR003372">
    <property type="entry name" value="PSII_PsbL"/>
</dbReference>
<dbReference type="InterPro" id="IPR037266">
    <property type="entry name" value="PSII_PsbL_sf"/>
</dbReference>
<dbReference type="NCBIfam" id="NF001972">
    <property type="entry name" value="PRK00753.1"/>
    <property type="match status" value="1"/>
</dbReference>
<dbReference type="Pfam" id="PF02419">
    <property type="entry name" value="PsbL"/>
    <property type="match status" value="1"/>
</dbReference>
<dbReference type="SUPFAM" id="SSF161017">
    <property type="entry name" value="Photosystem II reaction center protein L, PsbL"/>
    <property type="match status" value="1"/>
</dbReference>
<feature type="chain" id="PRO_0000306213" description="Photosystem II reaction center protein L">
    <location>
        <begin position="1"/>
        <end position="39"/>
    </location>
</feature>
<feature type="transmembrane region" description="Helical" evidence="1">
    <location>
        <begin position="18"/>
        <end position="38"/>
    </location>
</feature>
<sequence>MERNTNPNNLPVELNRTSLYLGLLFVFVTGVLMSSYFFN</sequence>
<name>PSBL_SYNS9</name>
<proteinExistence type="inferred from homology"/>
<reference key="1">
    <citation type="submission" date="2005-08" db="EMBL/GenBank/DDBJ databases">
        <title>Complete sequence of Synechococcus sp. CC9902.</title>
        <authorList>
            <person name="Copeland A."/>
            <person name="Lucas S."/>
            <person name="Lapidus A."/>
            <person name="Barry K."/>
            <person name="Detter J.C."/>
            <person name="Glavina T."/>
            <person name="Hammon N."/>
            <person name="Israni S."/>
            <person name="Pitluck S."/>
            <person name="Martinez M."/>
            <person name="Schmutz J."/>
            <person name="Larimer F."/>
            <person name="Land M."/>
            <person name="Kyrpides N."/>
            <person name="Ivanova N."/>
            <person name="Richardson P."/>
        </authorList>
    </citation>
    <scope>NUCLEOTIDE SEQUENCE [LARGE SCALE GENOMIC DNA]</scope>
    <source>
        <strain>CC9902</strain>
    </source>
</reference>
<keyword id="KW-0472">Membrane</keyword>
<keyword id="KW-0602">Photosynthesis</keyword>
<keyword id="KW-0604">Photosystem II</keyword>
<keyword id="KW-0674">Reaction center</keyword>
<keyword id="KW-1185">Reference proteome</keyword>
<keyword id="KW-0793">Thylakoid</keyword>
<keyword id="KW-0812">Transmembrane</keyword>
<keyword id="KW-1133">Transmembrane helix</keyword>
<evidence type="ECO:0000255" key="1">
    <source>
        <dbReference type="HAMAP-Rule" id="MF_01317"/>
    </source>
</evidence>
<protein>
    <recommendedName>
        <fullName evidence="1">Photosystem II reaction center protein L</fullName>
        <shortName evidence="1">PSII-L</shortName>
    </recommendedName>
</protein>